<accession>Q39H28</accession>
<dbReference type="EC" id="5.4.99.25" evidence="1"/>
<dbReference type="EMBL" id="CP000151">
    <property type="protein sequence ID" value="ABB08238.1"/>
    <property type="molecule type" value="Genomic_DNA"/>
</dbReference>
<dbReference type="SMR" id="Q39H28"/>
<dbReference type="KEGG" id="bur:Bcep18194_A4643"/>
<dbReference type="PATRIC" id="fig|482957.22.peg.1553"/>
<dbReference type="HOGENOM" id="CLU_032087_0_3_4"/>
<dbReference type="Proteomes" id="UP000002705">
    <property type="component" value="Chromosome 1"/>
</dbReference>
<dbReference type="GO" id="GO:0003723">
    <property type="term" value="F:RNA binding"/>
    <property type="evidence" value="ECO:0007669"/>
    <property type="project" value="InterPro"/>
</dbReference>
<dbReference type="GO" id="GO:0160148">
    <property type="term" value="F:tRNA pseudouridine(55) synthase activity"/>
    <property type="evidence" value="ECO:0007669"/>
    <property type="project" value="UniProtKB-EC"/>
</dbReference>
<dbReference type="GO" id="GO:1990481">
    <property type="term" value="P:mRNA pseudouridine synthesis"/>
    <property type="evidence" value="ECO:0007669"/>
    <property type="project" value="TreeGrafter"/>
</dbReference>
<dbReference type="GO" id="GO:0031119">
    <property type="term" value="P:tRNA pseudouridine synthesis"/>
    <property type="evidence" value="ECO:0007669"/>
    <property type="project" value="UniProtKB-UniRule"/>
</dbReference>
<dbReference type="CDD" id="cd02573">
    <property type="entry name" value="PseudoU_synth_EcTruB"/>
    <property type="match status" value="1"/>
</dbReference>
<dbReference type="CDD" id="cd21152">
    <property type="entry name" value="PUA_TruB_bacterial"/>
    <property type="match status" value="1"/>
</dbReference>
<dbReference type="FunFam" id="3.30.2350.10:FF:000011">
    <property type="entry name" value="tRNA pseudouridine synthase B"/>
    <property type="match status" value="1"/>
</dbReference>
<dbReference type="Gene3D" id="3.30.2350.10">
    <property type="entry name" value="Pseudouridine synthase"/>
    <property type="match status" value="1"/>
</dbReference>
<dbReference type="Gene3D" id="2.30.130.10">
    <property type="entry name" value="PUA domain"/>
    <property type="match status" value="1"/>
</dbReference>
<dbReference type="HAMAP" id="MF_01080">
    <property type="entry name" value="TruB_bact"/>
    <property type="match status" value="1"/>
</dbReference>
<dbReference type="InterPro" id="IPR020103">
    <property type="entry name" value="PsdUridine_synth_cat_dom_sf"/>
</dbReference>
<dbReference type="InterPro" id="IPR002501">
    <property type="entry name" value="PsdUridine_synth_N"/>
</dbReference>
<dbReference type="InterPro" id="IPR015947">
    <property type="entry name" value="PUA-like_sf"/>
</dbReference>
<dbReference type="InterPro" id="IPR036974">
    <property type="entry name" value="PUA_sf"/>
</dbReference>
<dbReference type="InterPro" id="IPR014780">
    <property type="entry name" value="tRNA_psdUridine_synth_TruB"/>
</dbReference>
<dbReference type="InterPro" id="IPR015240">
    <property type="entry name" value="tRNA_sdUridine_synth_fam1_C"/>
</dbReference>
<dbReference type="InterPro" id="IPR032819">
    <property type="entry name" value="TruB_C"/>
</dbReference>
<dbReference type="NCBIfam" id="TIGR00431">
    <property type="entry name" value="TruB"/>
    <property type="match status" value="1"/>
</dbReference>
<dbReference type="PANTHER" id="PTHR13767:SF2">
    <property type="entry name" value="PSEUDOURIDYLATE SYNTHASE TRUB1"/>
    <property type="match status" value="1"/>
</dbReference>
<dbReference type="PANTHER" id="PTHR13767">
    <property type="entry name" value="TRNA-PSEUDOURIDINE SYNTHASE"/>
    <property type="match status" value="1"/>
</dbReference>
<dbReference type="Pfam" id="PF09157">
    <property type="entry name" value="TruB-C_2"/>
    <property type="match status" value="1"/>
</dbReference>
<dbReference type="Pfam" id="PF16198">
    <property type="entry name" value="TruB_C_2"/>
    <property type="match status" value="1"/>
</dbReference>
<dbReference type="Pfam" id="PF01509">
    <property type="entry name" value="TruB_N"/>
    <property type="match status" value="1"/>
</dbReference>
<dbReference type="SUPFAM" id="SSF55120">
    <property type="entry name" value="Pseudouridine synthase"/>
    <property type="match status" value="1"/>
</dbReference>
<dbReference type="SUPFAM" id="SSF88697">
    <property type="entry name" value="PUA domain-like"/>
    <property type="match status" value="1"/>
</dbReference>
<feature type="chain" id="PRO_0000229346" description="tRNA pseudouridine synthase B">
    <location>
        <begin position="1"/>
        <end position="322"/>
    </location>
</feature>
<feature type="region of interest" description="Disordered" evidence="2">
    <location>
        <begin position="1"/>
        <end position="22"/>
    </location>
</feature>
<feature type="compositionally biased region" description="Basic and acidic residues" evidence="2">
    <location>
        <begin position="1"/>
        <end position="11"/>
    </location>
</feature>
<feature type="active site" description="Nucleophile" evidence="1">
    <location>
        <position position="65"/>
    </location>
</feature>
<name>TRUB_BURL3</name>
<evidence type="ECO:0000255" key="1">
    <source>
        <dbReference type="HAMAP-Rule" id="MF_01080"/>
    </source>
</evidence>
<evidence type="ECO:0000256" key="2">
    <source>
        <dbReference type="SAM" id="MobiDB-lite"/>
    </source>
</evidence>
<organism>
    <name type="scientific">Burkholderia lata (strain ATCC 17760 / DSM 23089 / LMG 22485 / NCIMB 9086 / R18194 / 383)</name>
    <dbReference type="NCBI Taxonomy" id="482957"/>
    <lineage>
        <taxon>Bacteria</taxon>
        <taxon>Pseudomonadati</taxon>
        <taxon>Pseudomonadota</taxon>
        <taxon>Betaproteobacteria</taxon>
        <taxon>Burkholderiales</taxon>
        <taxon>Burkholderiaceae</taxon>
        <taxon>Burkholderia</taxon>
        <taxon>Burkholderia cepacia complex</taxon>
    </lineage>
</organism>
<reference key="1">
    <citation type="submission" date="2005-10" db="EMBL/GenBank/DDBJ databases">
        <title>Complete sequence of chromosome 1 of Burkholderia sp. 383.</title>
        <authorList>
            <consortium name="US DOE Joint Genome Institute"/>
            <person name="Copeland A."/>
            <person name="Lucas S."/>
            <person name="Lapidus A."/>
            <person name="Barry K."/>
            <person name="Detter J.C."/>
            <person name="Glavina T."/>
            <person name="Hammon N."/>
            <person name="Israni S."/>
            <person name="Pitluck S."/>
            <person name="Chain P."/>
            <person name="Malfatti S."/>
            <person name="Shin M."/>
            <person name="Vergez L."/>
            <person name="Schmutz J."/>
            <person name="Larimer F."/>
            <person name="Land M."/>
            <person name="Kyrpides N."/>
            <person name="Lykidis A."/>
            <person name="Richardson P."/>
        </authorList>
    </citation>
    <scope>NUCLEOTIDE SEQUENCE [LARGE SCALE GENOMIC DNA]</scope>
    <source>
        <strain>ATCC 17760 / DSM 23089 / LMG 22485 / NCIMB 9086 / R18194 / 383</strain>
    </source>
</reference>
<protein>
    <recommendedName>
        <fullName evidence="1">tRNA pseudouridine synthase B</fullName>
        <ecNumber evidence="1">5.4.99.25</ecNumber>
    </recommendedName>
    <alternativeName>
        <fullName evidence="1">tRNA pseudouridine(55) synthase</fullName>
        <shortName evidence="1">Psi55 synthase</shortName>
    </alternativeName>
    <alternativeName>
        <fullName evidence="1">tRNA pseudouridylate synthase</fullName>
    </alternativeName>
    <alternativeName>
        <fullName evidence="1">tRNA-uridine isomerase</fullName>
    </alternativeName>
</protein>
<comment type="function">
    <text evidence="1">Responsible for synthesis of pseudouridine from uracil-55 in the psi GC loop of transfer RNAs.</text>
</comment>
<comment type="catalytic activity">
    <reaction evidence="1">
        <text>uridine(55) in tRNA = pseudouridine(55) in tRNA</text>
        <dbReference type="Rhea" id="RHEA:42532"/>
        <dbReference type="Rhea" id="RHEA-COMP:10101"/>
        <dbReference type="Rhea" id="RHEA-COMP:10102"/>
        <dbReference type="ChEBI" id="CHEBI:65314"/>
        <dbReference type="ChEBI" id="CHEBI:65315"/>
        <dbReference type="EC" id="5.4.99.25"/>
    </reaction>
</comment>
<comment type="similarity">
    <text evidence="1">Belongs to the pseudouridine synthase TruB family. Type 1 subfamily.</text>
</comment>
<proteinExistence type="inferred from homology"/>
<keyword id="KW-0413">Isomerase</keyword>
<keyword id="KW-0819">tRNA processing</keyword>
<gene>
    <name evidence="1" type="primary">truB</name>
    <name type="ordered locus">Bcep18194_A4643</name>
</gene>
<sequence>MRPPRTTELDRPMTTAASQRPRVPRRLLDGVLLLDKPVGLSSNDALIRAKRLLLAKKAGHTGTLDPLASGLLPLCFGEATKFSQDLLEADKTYEATMRLGQRTATGDAEGEVIDTRPVECDRAAVEAALVRFTGEIVQVPPMYSALKRDGKPLYEYARAGQTVEREGRNVTILALALLACDLPDVTFRVTCSKGTYVRTLAEDIGEALGCGAHLTMLRRTGVGALTLEHAVTLDALSDADDASRDAWLQPVDALLSTFPLVRLDETSAKRFLHGQRLPLSALDPIDAAEGERVRVYDATRLLGVARKANGVLAPERLVVTAA</sequence>